<sequence>MKTKIIVIVGPTAVGKTALAIEVAKRFNGEVVSGDSQQVYRGLDIGTAKASPEEQAAVPHHLIDVREITESYSAFDFVSEAKMTIEDIHSRGKLAIIAGGTGLYIQSLLEGYHLGGETPHEEILAYRASLEPYSDEELAHLVEQAGLEIPQFNRRRAMRALEIAHFGQDLENQEILYEPLIICLDDERSQLYERINHRVDLMFEAGLLDEAKWLFDHSPNVQAAKGIGYKELFPYFRGEQTFEEARESLKQATRRFAKRQLTWFRNRMQVTFYQIGESGVQDRILSQIEEFLDD</sequence>
<dbReference type="EC" id="2.5.1.75" evidence="1"/>
<dbReference type="EMBL" id="CP000410">
    <property type="protein sequence ID" value="ABJ53649.1"/>
    <property type="molecule type" value="Genomic_DNA"/>
</dbReference>
<dbReference type="RefSeq" id="WP_000850184.1">
    <property type="nucleotide sequence ID" value="NZ_JAMLJR010000001.1"/>
</dbReference>
<dbReference type="SMR" id="Q04LL6"/>
<dbReference type="PaxDb" id="373153-SPD_0583"/>
<dbReference type="KEGG" id="spd:SPD_0583"/>
<dbReference type="eggNOG" id="COG0324">
    <property type="taxonomic scope" value="Bacteria"/>
</dbReference>
<dbReference type="HOGENOM" id="CLU_032616_0_1_9"/>
<dbReference type="BioCyc" id="SPNE373153:G1G6V-648-MONOMER"/>
<dbReference type="Proteomes" id="UP000001452">
    <property type="component" value="Chromosome"/>
</dbReference>
<dbReference type="GO" id="GO:0005524">
    <property type="term" value="F:ATP binding"/>
    <property type="evidence" value="ECO:0007669"/>
    <property type="project" value="UniProtKB-UniRule"/>
</dbReference>
<dbReference type="GO" id="GO:0052381">
    <property type="term" value="F:tRNA dimethylallyltransferase activity"/>
    <property type="evidence" value="ECO:0007669"/>
    <property type="project" value="UniProtKB-UniRule"/>
</dbReference>
<dbReference type="GO" id="GO:0006400">
    <property type="term" value="P:tRNA modification"/>
    <property type="evidence" value="ECO:0007669"/>
    <property type="project" value="TreeGrafter"/>
</dbReference>
<dbReference type="Gene3D" id="3.40.50.300">
    <property type="entry name" value="P-loop containing nucleotide triphosphate hydrolases"/>
    <property type="match status" value="1"/>
</dbReference>
<dbReference type="HAMAP" id="MF_00185">
    <property type="entry name" value="IPP_trans"/>
    <property type="match status" value="1"/>
</dbReference>
<dbReference type="InterPro" id="IPR039657">
    <property type="entry name" value="Dimethylallyltransferase"/>
</dbReference>
<dbReference type="InterPro" id="IPR018022">
    <property type="entry name" value="IPT"/>
</dbReference>
<dbReference type="InterPro" id="IPR027417">
    <property type="entry name" value="P-loop_NTPase"/>
</dbReference>
<dbReference type="NCBIfam" id="TIGR00174">
    <property type="entry name" value="miaA"/>
    <property type="match status" value="1"/>
</dbReference>
<dbReference type="PANTHER" id="PTHR11088">
    <property type="entry name" value="TRNA DIMETHYLALLYLTRANSFERASE"/>
    <property type="match status" value="1"/>
</dbReference>
<dbReference type="PANTHER" id="PTHR11088:SF60">
    <property type="entry name" value="TRNA DIMETHYLALLYLTRANSFERASE"/>
    <property type="match status" value="1"/>
</dbReference>
<dbReference type="Pfam" id="PF01715">
    <property type="entry name" value="IPPT"/>
    <property type="match status" value="1"/>
</dbReference>
<dbReference type="SUPFAM" id="SSF52540">
    <property type="entry name" value="P-loop containing nucleoside triphosphate hydrolases"/>
    <property type="match status" value="2"/>
</dbReference>
<keyword id="KW-0067">ATP-binding</keyword>
<keyword id="KW-0460">Magnesium</keyword>
<keyword id="KW-0547">Nucleotide-binding</keyword>
<keyword id="KW-1185">Reference proteome</keyword>
<keyword id="KW-0808">Transferase</keyword>
<keyword id="KW-0819">tRNA processing</keyword>
<proteinExistence type="inferred from homology"/>
<accession>Q04LL6</accession>
<organism>
    <name type="scientific">Streptococcus pneumoniae serotype 2 (strain D39 / NCTC 7466)</name>
    <dbReference type="NCBI Taxonomy" id="373153"/>
    <lineage>
        <taxon>Bacteria</taxon>
        <taxon>Bacillati</taxon>
        <taxon>Bacillota</taxon>
        <taxon>Bacilli</taxon>
        <taxon>Lactobacillales</taxon>
        <taxon>Streptococcaceae</taxon>
        <taxon>Streptococcus</taxon>
    </lineage>
</organism>
<comment type="function">
    <text evidence="1">Catalyzes the transfer of a dimethylallyl group onto the adenine at position 37 in tRNAs that read codons beginning with uridine, leading to the formation of N6-(dimethylallyl)adenosine (i(6)A).</text>
</comment>
<comment type="catalytic activity">
    <reaction evidence="1">
        <text>adenosine(37) in tRNA + dimethylallyl diphosphate = N(6)-dimethylallyladenosine(37) in tRNA + diphosphate</text>
        <dbReference type="Rhea" id="RHEA:26482"/>
        <dbReference type="Rhea" id="RHEA-COMP:10162"/>
        <dbReference type="Rhea" id="RHEA-COMP:10375"/>
        <dbReference type="ChEBI" id="CHEBI:33019"/>
        <dbReference type="ChEBI" id="CHEBI:57623"/>
        <dbReference type="ChEBI" id="CHEBI:74411"/>
        <dbReference type="ChEBI" id="CHEBI:74415"/>
        <dbReference type="EC" id="2.5.1.75"/>
    </reaction>
</comment>
<comment type="cofactor">
    <cofactor evidence="1">
        <name>Mg(2+)</name>
        <dbReference type="ChEBI" id="CHEBI:18420"/>
    </cofactor>
</comment>
<comment type="subunit">
    <text evidence="1">Monomer.</text>
</comment>
<comment type="similarity">
    <text evidence="1">Belongs to the IPP transferase family.</text>
</comment>
<protein>
    <recommendedName>
        <fullName evidence="1">tRNA dimethylallyltransferase</fullName>
        <ecNumber evidence="1">2.5.1.75</ecNumber>
    </recommendedName>
    <alternativeName>
        <fullName evidence="1">Dimethylallyl diphosphate:tRNA dimethylallyltransferase</fullName>
        <shortName evidence="1">DMAPP:tRNA dimethylallyltransferase</shortName>
        <shortName evidence="1">DMATase</shortName>
    </alternativeName>
    <alternativeName>
        <fullName evidence="1">Isopentenyl-diphosphate:tRNA isopentenyltransferase</fullName>
        <shortName evidence="1">IPP transferase</shortName>
        <shortName evidence="1">IPPT</shortName>
        <shortName evidence="1">IPTase</shortName>
    </alternativeName>
</protein>
<reference key="1">
    <citation type="journal article" date="2007" name="J. Bacteriol.">
        <title>Genome sequence of Avery's virulent serotype 2 strain D39 of Streptococcus pneumoniae and comparison with that of unencapsulated laboratory strain R6.</title>
        <authorList>
            <person name="Lanie J.A."/>
            <person name="Ng W.-L."/>
            <person name="Kazmierczak K.M."/>
            <person name="Andrzejewski T.M."/>
            <person name="Davidsen T.M."/>
            <person name="Wayne K.J."/>
            <person name="Tettelin H."/>
            <person name="Glass J.I."/>
            <person name="Winkler M.E."/>
        </authorList>
    </citation>
    <scope>NUCLEOTIDE SEQUENCE [LARGE SCALE GENOMIC DNA]</scope>
    <source>
        <strain>D39 / NCTC 7466</strain>
    </source>
</reference>
<feature type="chain" id="PRO_1000020667" description="tRNA dimethylallyltransferase">
    <location>
        <begin position="1"/>
        <end position="294"/>
    </location>
</feature>
<feature type="region of interest" description="Interaction with substrate tRNA" evidence="1">
    <location>
        <begin position="35"/>
        <end position="38"/>
    </location>
</feature>
<feature type="binding site" evidence="1">
    <location>
        <begin position="10"/>
        <end position="17"/>
    </location>
    <ligand>
        <name>ATP</name>
        <dbReference type="ChEBI" id="CHEBI:30616"/>
    </ligand>
</feature>
<feature type="binding site" evidence="1">
    <location>
        <begin position="12"/>
        <end position="17"/>
    </location>
    <ligand>
        <name>substrate</name>
    </ligand>
</feature>
<feature type="site" description="Interaction with substrate tRNA" evidence="1">
    <location>
        <position position="101"/>
    </location>
</feature>
<feature type="site" description="Interaction with substrate tRNA" evidence="1">
    <location>
        <position position="127"/>
    </location>
</feature>
<evidence type="ECO:0000255" key="1">
    <source>
        <dbReference type="HAMAP-Rule" id="MF_00185"/>
    </source>
</evidence>
<gene>
    <name evidence="1" type="primary">miaA</name>
    <name type="ordered locus">SPD_0583</name>
</gene>
<name>MIAA_STRP2</name>